<accession>Q0SP68</accession>
<accession>G0IQU1</accession>
<reference key="1">
    <citation type="journal article" date="2006" name="BMC Genomics">
        <title>Comparative genome analysis: selection pressure on the Borrelia vls cassettes is essential for infectivity.</title>
        <authorList>
            <person name="Gloeckner G."/>
            <person name="Schulte-Spechtel U."/>
            <person name="Schilhabel M."/>
            <person name="Felder M."/>
            <person name="Suehnel J."/>
            <person name="Wilske B."/>
            <person name="Platzer M."/>
        </authorList>
    </citation>
    <scope>NUCLEOTIDE SEQUENCE [LARGE SCALE GENOMIC DNA]</scope>
    <source>
        <strain>PKo</strain>
    </source>
</reference>
<reference key="2">
    <citation type="journal article" date="2011" name="J. Bacteriol.">
        <title>Whole-genome sequences of two Borrelia afzelii and two Borrelia garinii Lyme disease agent isolates.</title>
        <authorList>
            <person name="Casjens S.R."/>
            <person name="Mongodin E.F."/>
            <person name="Qiu W.G."/>
            <person name="Dunn J.J."/>
            <person name="Luft B.J."/>
            <person name="Fraser-Liggett C.M."/>
            <person name="Schutzer S.E."/>
        </authorList>
    </citation>
    <scope>NUCLEOTIDE SEQUENCE [LARGE SCALE GENOMIC DNA]</scope>
    <source>
        <strain>PKo</strain>
    </source>
</reference>
<gene>
    <name evidence="1" type="primary">atpE</name>
    <name type="ordered locus">BAPKO_0097</name>
    <name type="ordered locus">BafPKo_0094</name>
</gene>
<proteinExistence type="inferred from homology"/>
<protein>
    <recommendedName>
        <fullName>V-type ATP synthase subunit E</fullName>
    </recommendedName>
    <alternativeName>
        <fullName evidence="1">V-ATPase subunit E</fullName>
    </alternativeName>
</protein>
<keyword id="KW-0066">ATP synthesis</keyword>
<keyword id="KW-0375">Hydrogen ion transport</keyword>
<keyword id="KW-0406">Ion transport</keyword>
<keyword id="KW-0813">Transport</keyword>
<comment type="function">
    <text evidence="1">Produces ATP from ADP in the presence of a proton gradient across the membrane.</text>
</comment>
<comment type="similarity">
    <text evidence="1">Belongs to the V-ATPase E subunit family.</text>
</comment>
<evidence type="ECO:0000255" key="1">
    <source>
        <dbReference type="HAMAP-Rule" id="MF_00311"/>
    </source>
</evidence>
<dbReference type="EMBL" id="CP000395">
    <property type="protein sequence ID" value="ABH01360.1"/>
    <property type="molecule type" value="Genomic_DNA"/>
</dbReference>
<dbReference type="EMBL" id="CP002933">
    <property type="protein sequence ID" value="AEL69327.1"/>
    <property type="molecule type" value="Genomic_DNA"/>
</dbReference>
<dbReference type="RefSeq" id="WP_004790537.1">
    <property type="nucleotide sequence ID" value="NZ_CP160066.1"/>
</dbReference>
<dbReference type="SMR" id="Q0SP68"/>
<dbReference type="STRING" id="29518.BLA32_03810"/>
<dbReference type="KEGG" id="baf:BAPKO_0097"/>
<dbReference type="KEGG" id="bafz:BafPKo_0094"/>
<dbReference type="PATRIC" id="fig|390236.22.peg.93"/>
<dbReference type="eggNOG" id="COG1390">
    <property type="taxonomic scope" value="Bacteria"/>
</dbReference>
<dbReference type="HOGENOM" id="CLU_105793_0_1_12"/>
<dbReference type="OrthoDB" id="1771105at2"/>
<dbReference type="Proteomes" id="UP000005216">
    <property type="component" value="Chromosome"/>
</dbReference>
<dbReference type="GO" id="GO:0033178">
    <property type="term" value="C:proton-transporting two-sector ATPase complex, catalytic domain"/>
    <property type="evidence" value="ECO:0007669"/>
    <property type="project" value="InterPro"/>
</dbReference>
<dbReference type="GO" id="GO:0005524">
    <property type="term" value="F:ATP binding"/>
    <property type="evidence" value="ECO:0007669"/>
    <property type="project" value="UniProtKB-UniRule"/>
</dbReference>
<dbReference type="GO" id="GO:0046933">
    <property type="term" value="F:proton-transporting ATP synthase activity, rotational mechanism"/>
    <property type="evidence" value="ECO:0007669"/>
    <property type="project" value="UniProtKB-UniRule"/>
</dbReference>
<dbReference type="GO" id="GO:0046961">
    <property type="term" value="F:proton-transporting ATPase activity, rotational mechanism"/>
    <property type="evidence" value="ECO:0007669"/>
    <property type="project" value="InterPro"/>
</dbReference>
<dbReference type="GO" id="GO:0042777">
    <property type="term" value="P:proton motive force-driven plasma membrane ATP synthesis"/>
    <property type="evidence" value="ECO:0007669"/>
    <property type="project" value="UniProtKB-UniRule"/>
</dbReference>
<dbReference type="Gene3D" id="1.20.5.2950">
    <property type="match status" value="1"/>
</dbReference>
<dbReference type="HAMAP" id="MF_00311">
    <property type="entry name" value="ATP_synth_E_arch"/>
    <property type="match status" value="1"/>
</dbReference>
<dbReference type="InterPro" id="IPR002842">
    <property type="entry name" value="ATPase_V1_Esu"/>
</dbReference>
<dbReference type="NCBIfam" id="NF002424">
    <property type="entry name" value="PRK01558.1"/>
    <property type="match status" value="1"/>
</dbReference>
<sequence>MQFEVKDLINKIKKDGLEEAERVSNDIILKAKREAEEIVARAEESARALKAKSEKEINDYKSHALEASRQAIRDLIIGVEKNLKSLFENTLKDNVVEVFSDNNFLAELIIKITDSWAKEEKLVVQLNESDFSSLEQILRLKLGNKLAQGIEIKPFKGISKGFKIQKKNIGLQYDFSAETVADILFDYLNPRFKEIIKVV</sequence>
<feature type="chain" id="PRO_0000322509" description="V-type ATP synthase subunit E">
    <location>
        <begin position="1"/>
        <end position="199"/>
    </location>
</feature>
<name>VATE_BORAP</name>
<organism>
    <name type="scientific">Borreliella afzelii (strain PKo)</name>
    <name type="common">Borrelia afzelii</name>
    <dbReference type="NCBI Taxonomy" id="390236"/>
    <lineage>
        <taxon>Bacteria</taxon>
        <taxon>Pseudomonadati</taxon>
        <taxon>Spirochaetota</taxon>
        <taxon>Spirochaetia</taxon>
        <taxon>Spirochaetales</taxon>
        <taxon>Borreliaceae</taxon>
        <taxon>Borreliella</taxon>
    </lineage>
</organism>